<proteinExistence type="inferred from homology"/>
<feature type="chain" id="PRO_0000252609" description="Glucose-6-phosphate isomerase">
    <location>
        <begin position="1"/>
        <end position="553"/>
    </location>
</feature>
<feature type="active site" description="Proton donor" evidence="1">
    <location>
        <position position="355"/>
    </location>
</feature>
<feature type="active site" evidence="1">
    <location>
        <position position="386"/>
    </location>
</feature>
<feature type="active site" evidence="1">
    <location>
        <position position="513"/>
    </location>
</feature>
<keyword id="KW-0963">Cytoplasm</keyword>
<keyword id="KW-0312">Gluconeogenesis</keyword>
<keyword id="KW-0324">Glycolysis</keyword>
<keyword id="KW-0413">Isomerase</keyword>
<keyword id="KW-1185">Reference proteome</keyword>
<gene>
    <name evidence="1" type="primary">pgi</name>
    <name type="ordered locus">BCI_0012</name>
</gene>
<accession>Q1LU73</accession>
<organism>
    <name type="scientific">Baumannia cicadellinicola subsp. Homalodisca coagulata</name>
    <dbReference type="NCBI Taxonomy" id="374463"/>
    <lineage>
        <taxon>Bacteria</taxon>
        <taxon>Pseudomonadati</taxon>
        <taxon>Pseudomonadota</taxon>
        <taxon>Gammaproteobacteria</taxon>
        <taxon>Candidatus Palibaumannia</taxon>
    </lineage>
</organism>
<reference key="1">
    <citation type="journal article" date="2006" name="PLoS Biol.">
        <title>Metabolic complementarity and genomics of the dual bacterial symbiosis of sharpshooters.</title>
        <authorList>
            <person name="Wu D."/>
            <person name="Daugherty S.C."/>
            <person name="Van Aken S.E."/>
            <person name="Pai G.H."/>
            <person name="Watkins K.L."/>
            <person name="Khouri H."/>
            <person name="Tallon L.J."/>
            <person name="Zaborsky J.M."/>
            <person name="Dunbar H.E."/>
            <person name="Tran P.L."/>
            <person name="Moran N.A."/>
            <person name="Eisen J.A."/>
        </authorList>
    </citation>
    <scope>NUCLEOTIDE SEQUENCE [LARGE SCALE GENOMIC DNA]</scope>
</reference>
<name>G6PI_BAUCH</name>
<dbReference type="EC" id="5.3.1.9" evidence="1"/>
<dbReference type="EMBL" id="CP000238">
    <property type="protein sequence ID" value="ABF13982.1"/>
    <property type="molecule type" value="Genomic_DNA"/>
</dbReference>
<dbReference type="RefSeq" id="WP_011520224.1">
    <property type="nucleotide sequence ID" value="NC_007984.1"/>
</dbReference>
<dbReference type="SMR" id="Q1LU73"/>
<dbReference type="STRING" id="374463.BCI_0012"/>
<dbReference type="KEGG" id="bci:BCI_0012"/>
<dbReference type="HOGENOM" id="CLU_017947_3_1_6"/>
<dbReference type="OrthoDB" id="140919at2"/>
<dbReference type="UniPathway" id="UPA00109">
    <property type="reaction ID" value="UER00181"/>
</dbReference>
<dbReference type="UniPathway" id="UPA00138"/>
<dbReference type="Proteomes" id="UP000002427">
    <property type="component" value="Chromosome"/>
</dbReference>
<dbReference type="GO" id="GO:0005829">
    <property type="term" value="C:cytosol"/>
    <property type="evidence" value="ECO:0007669"/>
    <property type="project" value="TreeGrafter"/>
</dbReference>
<dbReference type="GO" id="GO:0097367">
    <property type="term" value="F:carbohydrate derivative binding"/>
    <property type="evidence" value="ECO:0007669"/>
    <property type="project" value="InterPro"/>
</dbReference>
<dbReference type="GO" id="GO:0004347">
    <property type="term" value="F:glucose-6-phosphate isomerase activity"/>
    <property type="evidence" value="ECO:0007669"/>
    <property type="project" value="UniProtKB-UniRule"/>
</dbReference>
<dbReference type="GO" id="GO:0048029">
    <property type="term" value="F:monosaccharide binding"/>
    <property type="evidence" value="ECO:0007669"/>
    <property type="project" value="TreeGrafter"/>
</dbReference>
<dbReference type="GO" id="GO:0006094">
    <property type="term" value="P:gluconeogenesis"/>
    <property type="evidence" value="ECO:0007669"/>
    <property type="project" value="UniProtKB-UniRule"/>
</dbReference>
<dbReference type="GO" id="GO:0051156">
    <property type="term" value="P:glucose 6-phosphate metabolic process"/>
    <property type="evidence" value="ECO:0007669"/>
    <property type="project" value="TreeGrafter"/>
</dbReference>
<dbReference type="GO" id="GO:0006096">
    <property type="term" value="P:glycolytic process"/>
    <property type="evidence" value="ECO:0007669"/>
    <property type="project" value="UniProtKB-UniRule"/>
</dbReference>
<dbReference type="CDD" id="cd05015">
    <property type="entry name" value="SIS_PGI_1"/>
    <property type="match status" value="1"/>
</dbReference>
<dbReference type="CDD" id="cd05016">
    <property type="entry name" value="SIS_PGI_2"/>
    <property type="match status" value="1"/>
</dbReference>
<dbReference type="FunFam" id="1.10.1390.10:FF:000001">
    <property type="entry name" value="Glucose-6-phosphate isomerase"/>
    <property type="match status" value="1"/>
</dbReference>
<dbReference type="FunFam" id="3.40.50.10490:FF:000004">
    <property type="entry name" value="Glucose-6-phosphate isomerase"/>
    <property type="match status" value="1"/>
</dbReference>
<dbReference type="Gene3D" id="1.10.1390.10">
    <property type="match status" value="1"/>
</dbReference>
<dbReference type="Gene3D" id="3.40.50.10490">
    <property type="entry name" value="Glucose-6-phosphate isomerase like protein, domain 1"/>
    <property type="match status" value="2"/>
</dbReference>
<dbReference type="HAMAP" id="MF_00473">
    <property type="entry name" value="G6P_isomerase"/>
    <property type="match status" value="1"/>
</dbReference>
<dbReference type="InterPro" id="IPR001672">
    <property type="entry name" value="G6P_Isomerase"/>
</dbReference>
<dbReference type="InterPro" id="IPR023096">
    <property type="entry name" value="G6P_Isomerase_C"/>
</dbReference>
<dbReference type="InterPro" id="IPR018189">
    <property type="entry name" value="Phosphoglucose_isomerase_CS"/>
</dbReference>
<dbReference type="InterPro" id="IPR046348">
    <property type="entry name" value="SIS_dom_sf"/>
</dbReference>
<dbReference type="InterPro" id="IPR035476">
    <property type="entry name" value="SIS_PGI_1"/>
</dbReference>
<dbReference type="InterPro" id="IPR035482">
    <property type="entry name" value="SIS_PGI_2"/>
</dbReference>
<dbReference type="NCBIfam" id="NF001211">
    <property type="entry name" value="PRK00179.1"/>
    <property type="match status" value="1"/>
</dbReference>
<dbReference type="PANTHER" id="PTHR11469">
    <property type="entry name" value="GLUCOSE-6-PHOSPHATE ISOMERASE"/>
    <property type="match status" value="1"/>
</dbReference>
<dbReference type="PANTHER" id="PTHR11469:SF1">
    <property type="entry name" value="GLUCOSE-6-PHOSPHATE ISOMERASE"/>
    <property type="match status" value="1"/>
</dbReference>
<dbReference type="Pfam" id="PF00342">
    <property type="entry name" value="PGI"/>
    <property type="match status" value="1"/>
</dbReference>
<dbReference type="PRINTS" id="PR00662">
    <property type="entry name" value="G6PISOMERASE"/>
</dbReference>
<dbReference type="SUPFAM" id="SSF53697">
    <property type="entry name" value="SIS domain"/>
    <property type="match status" value="1"/>
</dbReference>
<dbReference type="PROSITE" id="PS00765">
    <property type="entry name" value="P_GLUCOSE_ISOMERASE_1"/>
    <property type="match status" value="1"/>
</dbReference>
<dbReference type="PROSITE" id="PS00174">
    <property type="entry name" value="P_GLUCOSE_ISOMERASE_2"/>
    <property type="match status" value="1"/>
</dbReference>
<dbReference type="PROSITE" id="PS51463">
    <property type="entry name" value="P_GLUCOSE_ISOMERASE_3"/>
    <property type="match status" value="1"/>
</dbReference>
<protein>
    <recommendedName>
        <fullName evidence="1">Glucose-6-phosphate isomerase</fullName>
        <shortName evidence="1">GPI</shortName>
        <ecNumber evidence="1">5.3.1.9</ecNumber>
    </recommendedName>
    <alternativeName>
        <fullName evidence="1">Phosphoglucose isomerase</fullName>
        <shortName evidence="1">PGI</shortName>
    </alternativeName>
    <alternativeName>
        <fullName evidence="1">Phosphohexose isomerase</fullName>
        <shortName evidence="1">PHI</shortName>
    </alternativeName>
</protein>
<evidence type="ECO:0000255" key="1">
    <source>
        <dbReference type="HAMAP-Rule" id="MF_00473"/>
    </source>
</evidence>
<comment type="function">
    <text evidence="1">Catalyzes the reversible isomerization of glucose-6-phosphate to fructose-6-phosphate.</text>
</comment>
<comment type="catalytic activity">
    <reaction evidence="1">
        <text>alpha-D-glucose 6-phosphate = beta-D-fructose 6-phosphate</text>
        <dbReference type="Rhea" id="RHEA:11816"/>
        <dbReference type="ChEBI" id="CHEBI:57634"/>
        <dbReference type="ChEBI" id="CHEBI:58225"/>
        <dbReference type="EC" id="5.3.1.9"/>
    </reaction>
</comment>
<comment type="pathway">
    <text evidence="1">Carbohydrate biosynthesis; gluconeogenesis.</text>
</comment>
<comment type="pathway">
    <text evidence="1">Carbohydrate degradation; glycolysis; D-glyceraldehyde 3-phosphate and glycerone phosphate from D-glucose: step 2/4.</text>
</comment>
<comment type="subcellular location">
    <subcellularLocation>
        <location evidence="1">Cytoplasm</location>
    </subcellularLocation>
</comment>
<comment type="similarity">
    <text evidence="1">Belongs to the GPI family.</text>
</comment>
<sequence length="553" mass="62871">MKNINPINTNAWNSLQQHFNNIKEVKIRDLFLLDSQRFDNFSAIFDNQILLDYSKNRITTETLYLLFALAKECDLPNAIAAMFSGQKINRTEDRAVLHIALRNRSNKIIAIDSQDIMPEVNAVLSKMRQFCNQIISGQWKGYTGKPITNIVNIGIGGSDLGPYMVTEALRPYKNHLNMHFVSNVDGTHITEKFKYLDPETTLFLIASKTFTTQETMTNAHSARNWFLKTAVNEQYIAQHFVAISTNANDVVKFGININNMFQFWDWVGGRYSLWSAIGLSIALSLGFENFELLLEGAHAMDCHFTETQLEHNLPVILALINIWYNNFFGFETEAIIPYDQYMHRFAAYLQQCHMESNGKSIDRNGNIINYQTGSIIWGEPGTNSQHSFYQLLHQGTKIVPCDFIVPAISHNPLGDHHLKLLANCFAQTEALAFGKSCQFIEEKFIMGTTSEQKLSIIPFKVCGGNRPTNSILVKQITPYNLGALISLYEHKIFTQSVILNIYAFDQWGVELGKTQANSVLSELATDNIVTCHNSSTNGLINYYKSWRYKTDDK</sequence>